<sequence length="243" mass="28247">MLTFLIPTAKEMVIPKESYPHLLPQPSQAILKAMAAMTTEDLAKSYRIKEEAAKKEQQRWQDMASQQSLAYPAYQLFNGLMYRHIKRDKLTTQEQAYLTQQVYITSSFYGIIPANHPIAEHRHDFHTRIKIEGQSLKSYWRPCYNQFAKEHPQVISLLSSEFDDVFSKDCKQLWISPKFMAEKEGRFKTHSTISKKARGAFLTACMENNCQTVDSLKSLVFAGFYYHPDLSTDHEFVYIKKEA</sequence>
<proteinExistence type="inferred from homology"/>
<feature type="chain" id="PRO_0000262068" description="UPF0246 protein MGAS9429_Spy1799">
    <location>
        <begin position="1"/>
        <end position="243"/>
    </location>
</feature>
<protein>
    <recommendedName>
        <fullName evidence="1">UPF0246 protein MGAS9429_Spy1799</fullName>
    </recommendedName>
</protein>
<gene>
    <name type="ordered locus">MGAS9429_Spy1799</name>
</gene>
<accession>Q1JJI7</accession>
<organism>
    <name type="scientific">Streptococcus pyogenes serotype M12 (strain MGAS9429)</name>
    <dbReference type="NCBI Taxonomy" id="370551"/>
    <lineage>
        <taxon>Bacteria</taxon>
        <taxon>Bacillati</taxon>
        <taxon>Bacillota</taxon>
        <taxon>Bacilli</taxon>
        <taxon>Lactobacillales</taxon>
        <taxon>Streptococcaceae</taxon>
        <taxon>Streptococcus</taxon>
    </lineage>
</organism>
<comment type="similarity">
    <text evidence="1">Belongs to the UPF0246 family.</text>
</comment>
<evidence type="ECO:0000255" key="1">
    <source>
        <dbReference type="HAMAP-Rule" id="MF_00652"/>
    </source>
</evidence>
<name>Y1799_STRPC</name>
<dbReference type="EMBL" id="CP000259">
    <property type="protein sequence ID" value="ABF32986.1"/>
    <property type="molecule type" value="Genomic_DNA"/>
</dbReference>
<dbReference type="SMR" id="Q1JJI7"/>
<dbReference type="KEGG" id="spk:MGAS9429_Spy1799"/>
<dbReference type="HOGENOM" id="CLU_061989_2_1_9"/>
<dbReference type="Proteomes" id="UP000002433">
    <property type="component" value="Chromosome"/>
</dbReference>
<dbReference type="GO" id="GO:0005829">
    <property type="term" value="C:cytosol"/>
    <property type="evidence" value="ECO:0007669"/>
    <property type="project" value="TreeGrafter"/>
</dbReference>
<dbReference type="GO" id="GO:0033194">
    <property type="term" value="P:response to hydroperoxide"/>
    <property type="evidence" value="ECO:0007669"/>
    <property type="project" value="TreeGrafter"/>
</dbReference>
<dbReference type="HAMAP" id="MF_00652">
    <property type="entry name" value="UPF0246"/>
    <property type="match status" value="1"/>
</dbReference>
<dbReference type="InterPro" id="IPR005583">
    <property type="entry name" value="YaaA"/>
</dbReference>
<dbReference type="NCBIfam" id="NF002543">
    <property type="entry name" value="PRK02101.1-4"/>
    <property type="match status" value="1"/>
</dbReference>
<dbReference type="PANTHER" id="PTHR30283:SF4">
    <property type="entry name" value="PEROXIDE STRESS RESISTANCE PROTEIN YAAA"/>
    <property type="match status" value="1"/>
</dbReference>
<dbReference type="PANTHER" id="PTHR30283">
    <property type="entry name" value="PEROXIDE STRESS RESPONSE PROTEIN YAAA"/>
    <property type="match status" value="1"/>
</dbReference>
<dbReference type="Pfam" id="PF03883">
    <property type="entry name" value="H2O2_YaaD"/>
    <property type="match status" value="1"/>
</dbReference>
<reference key="1">
    <citation type="journal article" date="2006" name="Proc. Natl. Acad. Sci. U.S.A.">
        <title>Molecular genetic anatomy of inter- and intraserotype variation in the human bacterial pathogen group A Streptococcus.</title>
        <authorList>
            <person name="Beres S.B."/>
            <person name="Richter E.W."/>
            <person name="Nagiec M.J."/>
            <person name="Sumby P."/>
            <person name="Porcella S.F."/>
            <person name="DeLeo F.R."/>
            <person name="Musser J.M."/>
        </authorList>
    </citation>
    <scope>NUCLEOTIDE SEQUENCE [LARGE SCALE GENOMIC DNA]</scope>
    <source>
        <strain>MGAS9429</strain>
    </source>
</reference>